<sequence>MKIFDYEDIQLVPNKCIVNSRSECDTTIQFGPRSFKLPVVPANMQTVMNETLAEWFAENDYFYIMHRFDEEGRIPFIKKMQEKGLFASISVGVKEREFGFVESLAAENVIPEYITIDIAHGHSDSVINMIKHIKKHIPEVFVIAGNVGTPEGVRELENAGADATKVGIGPGRVCITKIKTGFGTGGWQLSALNHCSKAARKPIIADGGIRTHGDIAKSIRFGASMVMVGSLFAAHEESPGETVELDGKMYKEYFGSASEFQKGEHKNVEGKKMFVEHKGSLFNTLTEMQQDLQSSISYAGGKDLNSLRKVDYVIVRNSIFNGDRDQNL</sequence>
<name>GUAC_STAS1</name>
<keyword id="KW-0521">NADP</keyword>
<keyword id="KW-0560">Oxidoreductase</keyword>
<keyword id="KW-1185">Reference proteome</keyword>
<feature type="chain" id="PRO_0000093772" description="GMP reductase">
    <location>
        <begin position="1"/>
        <end position="328"/>
    </location>
</feature>
<feature type="active site" description="Thioimidate intermediate" evidence="1">
    <location>
        <position position="174"/>
    </location>
</feature>
<feature type="binding site" evidence="1">
    <location>
        <begin position="203"/>
        <end position="226"/>
    </location>
    <ligand>
        <name>NADP(+)</name>
        <dbReference type="ChEBI" id="CHEBI:58349"/>
    </ligand>
</feature>
<organism>
    <name type="scientific">Staphylococcus saprophyticus subsp. saprophyticus (strain ATCC 15305 / DSM 20229 / NCIMB 8711 / NCTC 7292 / S-41)</name>
    <dbReference type="NCBI Taxonomy" id="342451"/>
    <lineage>
        <taxon>Bacteria</taxon>
        <taxon>Bacillati</taxon>
        <taxon>Bacillota</taxon>
        <taxon>Bacilli</taxon>
        <taxon>Bacillales</taxon>
        <taxon>Staphylococcaceae</taxon>
        <taxon>Staphylococcus</taxon>
    </lineage>
</organism>
<accession>Q49XD2</accession>
<dbReference type="EC" id="1.7.1.7" evidence="1"/>
<dbReference type="EMBL" id="AP008934">
    <property type="protein sequence ID" value="BAE18565.1"/>
    <property type="molecule type" value="Genomic_DNA"/>
</dbReference>
<dbReference type="RefSeq" id="WP_011303192.1">
    <property type="nucleotide sequence ID" value="NZ_MTGA01000038.1"/>
</dbReference>
<dbReference type="SMR" id="Q49XD2"/>
<dbReference type="GeneID" id="3615359"/>
<dbReference type="KEGG" id="ssp:SSP1420"/>
<dbReference type="PATRIC" id="fig|342451.11.peg.1424"/>
<dbReference type="eggNOG" id="COG0516">
    <property type="taxonomic scope" value="Bacteria"/>
</dbReference>
<dbReference type="HOGENOM" id="CLU_022552_5_0_9"/>
<dbReference type="OrthoDB" id="9805398at2"/>
<dbReference type="Proteomes" id="UP000006371">
    <property type="component" value="Chromosome"/>
</dbReference>
<dbReference type="GO" id="GO:0005829">
    <property type="term" value="C:cytosol"/>
    <property type="evidence" value="ECO:0007669"/>
    <property type="project" value="TreeGrafter"/>
</dbReference>
<dbReference type="GO" id="GO:1902560">
    <property type="term" value="C:GMP reductase complex"/>
    <property type="evidence" value="ECO:0007669"/>
    <property type="project" value="InterPro"/>
</dbReference>
<dbReference type="GO" id="GO:0003920">
    <property type="term" value="F:GMP reductase activity"/>
    <property type="evidence" value="ECO:0007669"/>
    <property type="project" value="UniProtKB-UniRule"/>
</dbReference>
<dbReference type="GO" id="GO:0006163">
    <property type="term" value="P:purine nucleotide metabolic process"/>
    <property type="evidence" value="ECO:0007669"/>
    <property type="project" value="UniProtKB-UniRule"/>
</dbReference>
<dbReference type="CDD" id="cd00381">
    <property type="entry name" value="IMPDH"/>
    <property type="match status" value="1"/>
</dbReference>
<dbReference type="FunFam" id="3.20.20.70:FF:000079">
    <property type="entry name" value="GMP reductase"/>
    <property type="match status" value="1"/>
</dbReference>
<dbReference type="Gene3D" id="3.20.20.70">
    <property type="entry name" value="Aldolase class I"/>
    <property type="match status" value="1"/>
</dbReference>
<dbReference type="HAMAP" id="MF_01511">
    <property type="entry name" value="GMP_reduct_type2"/>
    <property type="match status" value="1"/>
</dbReference>
<dbReference type="InterPro" id="IPR013785">
    <property type="entry name" value="Aldolase_TIM"/>
</dbReference>
<dbReference type="InterPro" id="IPR050139">
    <property type="entry name" value="GMP_reductase"/>
</dbReference>
<dbReference type="InterPro" id="IPR005994">
    <property type="entry name" value="GuaC_type_2"/>
</dbReference>
<dbReference type="InterPro" id="IPR015875">
    <property type="entry name" value="IMP_DH/GMP_Rdtase_CS"/>
</dbReference>
<dbReference type="InterPro" id="IPR001093">
    <property type="entry name" value="IMP_DH_GMPRt"/>
</dbReference>
<dbReference type="NCBIfam" id="TIGR01306">
    <property type="entry name" value="GMP_reduct_2"/>
    <property type="match status" value="1"/>
</dbReference>
<dbReference type="NCBIfam" id="NF003966">
    <property type="entry name" value="PRK05458.1"/>
    <property type="match status" value="1"/>
</dbReference>
<dbReference type="PANTHER" id="PTHR43170">
    <property type="entry name" value="GMP REDUCTASE"/>
    <property type="match status" value="1"/>
</dbReference>
<dbReference type="PANTHER" id="PTHR43170:SF5">
    <property type="entry name" value="GMP REDUCTASE"/>
    <property type="match status" value="1"/>
</dbReference>
<dbReference type="Pfam" id="PF00478">
    <property type="entry name" value="IMPDH"/>
    <property type="match status" value="1"/>
</dbReference>
<dbReference type="PIRSF" id="PIRSF036500">
    <property type="entry name" value="GMP_red_Firmic"/>
    <property type="match status" value="1"/>
</dbReference>
<dbReference type="SMART" id="SM01240">
    <property type="entry name" value="IMPDH"/>
    <property type="match status" value="1"/>
</dbReference>
<dbReference type="SUPFAM" id="SSF51412">
    <property type="entry name" value="Inosine monophosphate dehydrogenase (IMPDH)"/>
    <property type="match status" value="1"/>
</dbReference>
<dbReference type="PROSITE" id="PS00487">
    <property type="entry name" value="IMP_DH_GMP_RED"/>
    <property type="match status" value="1"/>
</dbReference>
<protein>
    <recommendedName>
        <fullName evidence="1">GMP reductase</fullName>
        <ecNumber evidence="1">1.7.1.7</ecNumber>
    </recommendedName>
    <alternativeName>
        <fullName evidence="1">Guanosine 5'-monophosphate oxidoreductase</fullName>
        <shortName evidence="1">Guanosine monophosphate reductase</shortName>
    </alternativeName>
</protein>
<reference key="1">
    <citation type="journal article" date="2005" name="Proc. Natl. Acad. Sci. U.S.A.">
        <title>Whole genome sequence of Staphylococcus saprophyticus reveals the pathogenesis of uncomplicated urinary tract infection.</title>
        <authorList>
            <person name="Kuroda M."/>
            <person name="Yamashita A."/>
            <person name="Hirakawa H."/>
            <person name="Kumano M."/>
            <person name="Morikawa K."/>
            <person name="Higashide M."/>
            <person name="Maruyama A."/>
            <person name="Inose Y."/>
            <person name="Matoba K."/>
            <person name="Toh H."/>
            <person name="Kuhara S."/>
            <person name="Hattori M."/>
            <person name="Ohta T."/>
        </authorList>
    </citation>
    <scope>NUCLEOTIDE SEQUENCE [LARGE SCALE GENOMIC DNA]</scope>
    <source>
        <strain>ATCC 15305 / DSM 20229 / NCIMB 8711 / NCTC 7292 / S-41</strain>
    </source>
</reference>
<gene>
    <name evidence="1" type="primary">guaC</name>
    <name type="ordered locus">SSP1420</name>
</gene>
<proteinExistence type="inferred from homology"/>
<comment type="function">
    <text evidence="1">Catalyzes the irreversible NADPH-dependent deamination of GMP to IMP. It functions in the conversion of nucleobase, nucleoside and nucleotide derivatives of G to A nucleotides, and in maintaining the intracellular balance of A and G nucleotides.</text>
</comment>
<comment type="catalytic activity">
    <reaction evidence="1">
        <text>IMP + NH4(+) + NADP(+) = GMP + NADPH + 2 H(+)</text>
        <dbReference type="Rhea" id="RHEA:17185"/>
        <dbReference type="ChEBI" id="CHEBI:15378"/>
        <dbReference type="ChEBI" id="CHEBI:28938"/>
        <dbReference type="ChEBI" id="CHEBI:57783"/>
        <dbReference type="ChEBI" id="CHEBI:58053"/>
        <dbReference type="ChEBI" id="CHEBI:58115"/>
        <dbReference type="ChEBI" id="CHEBI:58349"/>
        <dbReference type="EC" id="1.7.1.7"/>
    </reaction>
</comment>
<comment type="similarity">
    <text evidence="1">Belongs to the IMPDH/GMPR family. GuaC type 2 subfamily.</text>
</comment>
<evidence type="ECO:0000255" key="1">
    <source>
        <dbReference type="HAMAP-Rule" id="MF_01511"/>
    </source>
</evidence>